<evidence type="ECO:0000250" key="1">
    <source>
        <dbReference type="UniProtKB" id="P75799"/>
    </source>
</evidence>
<evidence type="ECO:0000255" key="2"/>
<evidence type="ECO:0000255" key="3">
    <source>
        <dbReference type="PROSITE-ProRule" id="PRU00441"/>
    </source>
</evidence>
<evidence type="ECO:0000305" key="4"/>
<name>GSID_PECAS</name>
<organism>
    <name type="scientific">Pectobacterium atrosepticum (strain SCRI 1043 / ATCC BAA-672)</name>
    <name type="common">Erwinia carotovora subsp. atroseptica</name>
    <dbReference type="NCBI Taxonomy" id="218491"/>
    <lineage>
        <taxon>Bacteria</taxon>
        <taxon>Pseudomonadati</taxon>
        <taxon>Pseudomonadota</taxon>
        <taxon>Gammaproteobacteria</taxon>
        <taxon>Enterobacterales</taxon>
        <taxon>Pectobacteriaceae</taxon>
        <taxon>Pectobacterium</taxon>
    </lineage>
</organism>
<proteinExistence type="inferred from homology"/>
<gene>
    <name evidence="1" type="primary">gsiD</name>
    <name type="ordered locus">ECA2832</name>
</gene>
<accession>Q6D3B2</accession>
<comment type="function">
    <text evidence="1">Part of the ABC transporter complex GsiABCD involved in glutathione import. Probably responsible for the translocation of the substrate across the membrane.</text>
</comment>
<comment type="subunit">
    <text evidence="1">The complex is composed of two ATP-binding proteins (GsiA), two transmembrane proteins (GsiC and GsiD) and a solute-binding protein (GsiB).</text>
</comment>
<comment type="subcellular location">
    <subcellularLocation>
        <location evidence="1">Cell inner membrane</location>
        <topology evidence="2">Multi-pass membrane protein</topology>
    </subcellularLocation>
</comment>
<comment type="similarity">
    <text evidence="4">Belongs to the binding-protein-dependent transport system permease family.</text>
</comment>
<feature type="chain" id="PRO_0000280007" description="Glutathione transport system permease protein GsiD">
    <location>
        <begin position="1"/>
        <end position="301"/>
    </location>
</feature>
<feature type="transmembrane region" description="Helical" evidence="3">
    <location>
        <begin position="37"/>
        <end position="57"/>
    </location>
</feature>
<feature type="transmembrane region" description="Helical" evidence="3">
    <location>
        <begin position="103"/>
        <end position="123"/>
    </location>
</feature>
<feature type="transmembrane region" description="Helical" evidence="3">
    <location>
        <begin position="141"/>
        <end position="161"/>
    </location>
</feature>
<feature type="transmembrane region" description="Helical" evidence="3">
    <location>
        <begin position="162"/>
        <end position="182"/>
    </location>
</feature>
<feature type="transmembrane region" description="Helical" evidence="3">
    <location>
        <begin position="220"/>
        <end position="240"/>
    </location>
</feature>
<feature type="transmembrane region" description="Helical" evidence="3">
    <location>
        <begin position="264"/>
        <end position="284"/>
    </location>
</feature>
<feature type="domain" description="ABC transmembrane type-1" evidence="3">
    <location>
        <begin position="99"/>
        <end position="288"/>
    </location>
</feature>
<sequence length="301" mass="33268">MRHWRRKAMLATLPVIRDKSVRTPWREFWRRFLRQHVAVAAGLFVLLLIAIAFWAQYLMPYDAENYFDYDRLNEGPSSAHWLGVDSLGRDIFSRILMGTRISLAAGIFSVLVGMMIGTTLGLLAGYYEGWADRIIMRICDVLFAFPGILLAIAVVAIMGSGMANVVVAVAIFSIPAFARLVRGNTLVLKQLTYIESARSMGANDWTILFRHILPGSVSSIVVFFSMRIGMSIITAASLSFLGLGAQPPMPEWGAMLNEARSDMVIAPHVAIFPSLAIFLTVLAFNLLGDGLRDALDPKLKS</sequence>
<keyword id="KW-0997">Cell inner membrane</keyword>
<keyword id="KW-1003">Cell membrane</keyword>
<keyword id="KW-0472">Membrane</keyword>
<keyword id="KW-1185">Reference proteome</keyword>
<keyword id="KW-0812">Transmembrane</keyword>
<keyword id="KW-1133">Transmembrane helix</keyword>
<keyword id="KW-0813">Transport</keyword>
<dbReference type="EMBL" id="BX950851">
    <property type="protein sequence ID" value="CAG75732.1"/>
    <property type="molecule type" value="Genomic_DNA"/>
</dbReference>
<dbReference type="RefSeq" id="WP_011094366.1">
    <property type="nucleotide sequence ID" value="NC_004547.2"/>
</dbReference>
<dbReference type="SMR" id="Q6D3B2"/>
<dbReference type="STRING" id="218491.ECA2832"/>
<dbReference type="GeneID" id="57208479"/>
<dbReference type="KEGG" id="eca:ECA2832"/>
<dbReference type="PATRIC" id="fig|218491.5.peg.2873"/>
<dbReference type="eggNOG" id="COG1173">
    <property type="taxonomic scope" value="Bacteria"/>
</dbReference>
<dbReference type="HOGENOM" id="CLU_028518_1_1_6"/>
<dbReference type="OrthoDB" id="9805884at2"/>
<dbReference type="Proteomes" id="UP000007966">
    <property type="component" value="Chromosome"/>
</dbReference>
<dbReference type="GO" id="GO:0005886">
    <property type="term" value="C:plasma membrane"/>
    <property type="evidence" value="ECO:0007669"/>
    <property type="project" value="UniProtKB-SubCell"/>
</dbReference>
<dbReference type="GO" id="GO:0071916">
    <property type="term" value="F:dipeptide transmembrane transporter activity"/>
    <property type="evidence" value="ECO:0007669"/>
    <property type="project" value="TreeGrafter"/>
</dbReference>
<dbReference type="CDD" id="cd06261">
    <property type="entry name" value="TM_PBP2"/>
    <property type="match status" value="1"/>
</dbReference>
<dbReference type="FunFam" id="1.10.3720.10:FF:000022">
    <property type="entry name" value="Glutathione ABC transporter permease GsiD"/>
    <property type="match status" value="1"/>
</dbReference>
<dbReference type="Gene3D" id="1.10.3720.10">
    <property type="entry name" value="MetI-like"/>
    <property type="match status" value="1"/>
</dbReference>
<dbReference type="InterPro" id="IPR050366">
    <property type="entry name" value="BP-dependent_transpt_permease"/>
</dbReference>
<dbReference type="InterPro" id="IPR000515">
    <property type="entry name" value="MetI-like"/>
</dbReference>
<dbReference type="InterPro" id="IPR035906">
    <property type="entry name" value="MetI-like_sf"/>
</dbReference>
<dbReference type="InterPro" id="IPR025966">
    <property type="entry name" value="OppC_N"/>
</dbReference>
<dbReference type="NCBIfam" id="NF011662">
    <property type="entry name" value="PRK15082.1"/>
    <property type="match status" value="1"/>
</dbReference>
<dbReference type="PANTHER" id="PTHR43386:SF3">
    <property type="entry name" value="GLUTATHIONE TRANSPORT SYSTEM PERMEASE PROTEIN GSID"/>
    <property type="match status" value="1"/>
</dbReference>
<dbReference type="PANTHER" id="PTHR43386">
    <property type="entry name" value="OLIGOPEPTIDE TRANSPORT SYSTEM PERMEASE PROTEIN APPC"/>
    <property type="match status" value="1"/>
</dbReference>
<dbReference type="Pfam" id="PF00528">
    <property type="entry name" value="BPD_transp_1"/>
    <property type="match status" value="1"/>
</dbReference>
<dbReference type="Pfam" id="PF12911">
    <property type="entry name" value="OppC_N"/>
    <property type="match status" value="1"/>
</dbReference>
<dbReference type="SUPFAM" id="SSF161098">
    <property type="entry name" value="MetI-like"/>
    <property type="match status" value="1"/>
</dbReference>
<dbReference type="PROSITE" id="PS50928">
    <property type="entry name" value="ABC_TM1"/>
    <property type="match status" value="1"/>
</dbReference>
<reference key="1">
    <citation type="journal article" date="2004" name="Proc. Natl. Acad. Sci. U.S.A.">
        <title>Genome sequence of the enterobacterial phytopathogen Erwinia carotovora subsp. atroseptica and characterization of virulence factors.</title>
        <authorList>
            <person name="Bell K.S."/>
            <person name="Sebaihia M."/>
            <person name="Pritchard L."/>
            <person name="Holden M.T.G."/>
            <person name="Hyman L.J."/>
            <person name="Holeva M.C."/>
            <person name="Thomson N.R."/>
            <person name="Bentley S.D."/>
            <person name="Churcher L.J.C."/>
            <person name="Mungall K."/>
            <person name="Atkin R."/>
            <person name="Bason N."/>
            <person name="Brooks K."/>
            <person name="Chillingworth T."/>
            <person name="Clark K."/>
            <person name="Doggett J."/>
            <person name="Fraser A."/>
            <person name="Hance Z."/>
            <person name="Hauser H."/>
            <person name="Jagels K."/>
            <person name="Moule S."/>
            <person name="Norbertczak H."/>
            <person name="Ormond D."/>
            <person name="Price C."/>
            <person name="Quail M.A."/>
            <person name="Sanders M."/>
            <person name="Walker D."/>
            <person name="Whitehead S."/>
            <person name="Salmond G.P.C."/>
            <person name="Birch P.R.J."/>
            <person name="Parkhill J."/>
            <person name="Toth I.K."/>
        </authorList>
    </citation>
    <scope>NUCLEOTIDE SEQUENCE [LARGE SCALE GENOMIC DNA]</scope>
    <source>
        <strain>SCRI 1043 / ATCC BAA-672</strain>
    </source>
</reference>
<protein>
    <recommendedName>
        <fullName evidence="1">Glutathione transport system permease protein GsiD</fullName>
    </recommendedName>
</protein>